<accession>Q9BXD5</accession>
<accession>B2R839</accession>
<accession>Q4G0Q8</accession>
<accession>Q4G0Z2</accession>
<accession>Q64L88</accession>
<accession>Q6PEL0</accession>
<name>NPL_HUMAN</name>
<dbReference type="EC" id="4.1.3.3" evidence="5"/>
<dbReference type="EMBL" id="AF338436">
    <property type="protein sequence ID" value="AAK25795.1"/>
    <property type="molecule type" value="mRNA"/>
</dbReference>
<dbReference type="EMBL" id="AY336748">
    <property type="protein sequence ID" value="AAQ82432.1"/>
    <property type="molecule type" value="mRNA"/>
</dbReference>
<dbReference type="EMBL" id="AK313225">
    <property type="protein sequence ID" value="BAG36036.1"/>
    <property type="molecule type" value="mRNA"/>
</dbReference>
<dbReference type="EMBL" id="AL355999">
    <property type="status" value="NOT_ANNOTATED_CDS"/>
    <property type="molecule type" value="Genomic_DNA"/>
</dbReference>
<dbReference type="EMBL" id="AL513344">
    <property type="status" value="NOT_ANNOTATED_CDS"/>
    <property type="molecule type" value="Genomic_DNA"/>
</dbReference>
<dbReference type="EMBL" id="BC034966">
    <property type="status" value="NOT_ANNOTATED_CDS"/>
    <property type="molecule type" value="mRNA"/>
</dbReference>
<dbReference type="EMBL" id="BC042003">
    <property type="status" value="NOT_ANNOTATED_CDS"/>
    <property type="molecule type" value="mRNA"/>
</dbReference>
<dbReference type="EMBL" id="BC058003">
    <property type="protein sequence ID" value="AAH58003.1"/>
    <property type="molecule type" value="mRNA"/>
</dbReference>
<dbReference type="EMBL" id="BC125051">
    <property type="protein sequence ID" value="AAI25052.1"/>
    <property type="molecule type" value="mRNA"/>
</dbReference>
<dbReference type="CCDS" id="CCDS1350.1">
    <molecule id="Q9BXD5-1"/>
</dbReference>
<dbReference type="CCDS" id="CCDS55666.1">
    <molecule id="Q9BXD5-4"/>
</dbReference>
<dbReference type="CCDS" id="CCDS55667.1">
    <molecule id="Q9BXD5-2"/>
</dbReference>
<dbReference type="RefSeq" id="NP_001186979.1">
    <molecule id="Q9BXD5-2"/>
    <property type="nucleotide sequence ID" value="NM_001200050.2"/>
</dbReference>
<dbReference type="RefSeq" id="NP_001186980.1">
    <molecule id="Q9BXD5-4"/>
    <property type="nucleotide sequence ID" value="NM_001200051.2"/>
</dbReference>
<dbReference type="RefSeq" id="NP_001186985.1">
    <molecule id="Q9BXD5-3"/>
    <property type="nucleotide sequence ID" value="NM_001200056.2"/>
</dbReference>
<dbReference type="RefSeq" id="NP_110396.1">
    <molecule id="Q9BXD5-1"/>
    <property type="nucleotide sequence ID" value="NM_030769.3"/>
</dbReference>
<dbReference type="PDB" id="6ARH">
    <property type="method" value="X-ray"/>
    <property type="resolution" value="1.60 A"/>
    <property type="chains" value="A/B/C/D=1-320"/>
</dbReference>
<dbReference type="PDBsum" id="6ARH"/>
<dbReference type="SMR" id="Q9BXD5"/>
<dbReference type="BioGRID" id="123344">
    <property type="interactions" value="8"/>
</dbReference>
<dbReference type="FunCoup" id="Q9BXD5">
    <property type="interactions" value="617"/>
</dbReference>
<dbReference type="IntAct" id="Q9BXD5">
    <property type="interactions" value="6"/>
</dbReference>
<dbReference type="STRING" id="9606.ENSP00000258317"/>
<dbReference type="iPTMnet" id="Q9BXD5"/>
<dbReference type="PhosphoSitePlus" id="Q9BXD5"/>
<dbReference type="BioMuta" id="NPL"/>
<dbReference type="DMDM" id="74752428"/>
<dbReference type="jPOST" id="Q9BXD5"/>
<dbReference type="MassIVE" id="Q9BXD5"/>
<dbReference type="PaxDb" id="9606-ENSP00000258317"/>
<dbReference type="PeptideAtlas" id="Q9BXD5"/>
<dbReference type="ProteomicsDB" id="79405">
    <molecule id="Q9BXD5-1"/>
</dbReference>
<dbReference type="ProteomicsDB" id="79406">
    <molecule id="Q9BXD5-2"/>
</dbReference>
<dbReference type="ProteomicsDB" id="79407">
    <molecule id="Q9BXD5-3"/>
</dbReference>
<dbReference type="ProteomicsDB" id="79408">
    <molecule id="Q9BXD5-4"/>
</dbReference>
<dbReference type="ProteomicsDB" id="79409">
    <molecule id="Q9BXD5-5"/>
</dbReference>
<dbReference type="Pumba" id="Q9BXD5"/>
<dbReference type="Antibodypedia" id="34441">
    <property type="antibodies" value="125 antibodies from 21 providers"/>
</dbReference>
<dbReference type="DNASU" id="80896"/>
<dbReference type="Ensembl" id="ENST00000258317.6">
    <molecule id="Q9BXD5-1"/>
    <property type="protein sequence ID" value="ENSP00000258317.2"/>
    <property type="gene ID" value="ENSG00000135838.14"/>
</dbReference>
<dbReference type="Ensembl" id="ENST00000367552.6">
    <molecule id="Q9BXD5-4"/>
    <property type="protein sequence ID" value="ENSP00000356523.2"/>
    <property type="gene ID" value="ENSG00000135838.14"/>
</dbReference>
<dbReference type="Ensembl" id="ENST00000367553.6">
    <molecule id="Q9BXD5-1"/>
    <property type="protein sequence ID" value="ENSP00000356524.1"/>
    <property type="gene ID" value="ENSG00000135838.14"/>
</dbReference>
<dbReference type="Ensembl" id="ENST00000367554.7">
    <molecule id="Q9BXD5-2"/>
    <property type="protein sequence ID" value="ENSP00000356525.3"/>
    <property type="gene ID" value="ENSG00000135838.14"/>
</dbReference>
<dbReference type="Ensembl" id="ENST00000367555.5">
    <molecule id="Q9BXD5-4"/>
    <property type="protein sequence ID" value="ENSP00000356526.1"/>
    <property type="gene ID" value="ENSG00000135838.14"/>
</dbReference>
<dbReference type="GeneID" id="80896"/>
<dbReference type="KEGG" id="hsa:80896"/>
<dbReference type="MANE-Select" id="ENST00000367553.6">
    <property type="protein sequence ID" value="ENSP00000356524.1"/>
    <property type="RefSeq nucleotide sequence ID" value="NM_030769.3"/>
    <property type="RefSeq protein sequence ID" value="NP_110396.1"/>
</dbReference>
<dbReference type="UCSC" id="uc001gpo.2">
    <molecule id="Q9BXD5-1"/>
    <property type="organism name" value="human"/>
</dbReference>
<dbReference type="AGR" id="HGNC:16781"/>
<dbReference type="CTD" id="80896"/>
<dbReference type="DisGeNET" id="80896"/>
<dbReference type="GeneCards" id="NPL"/>
<dbReference type="HGNC" id="HGNC:16781">
    <property type="gene designation" value="NPL"/>
</dbReference>
<dbReference type="HPA" id="ENSG00000135838">
    <property type="expression patterns" value="Tissue enhanced (kidney, placenta)"/>
</dbReference>
<dbReference type="MIM" id="611412">
    <property type="type" value="gene"/>
</dbReference>
<dbReference type="neXtProt" id="NX_Q9BXD5"/>
<dbReference type="OpenTargets" id="ENSG00000135838"/>
<dbReference type="PharmGKB" id="PA25602"/>
<dbReference type="VEuPathDB" id="HostDB:ENSG00000135838"/>
<dbReference type="eggNOG" id="ENOG502QQA3">
    <property type="taxonomic scope" value="Eukaryota"/>
</dbReference>
<dbReference type="GeneTree" id="ENSGT00530000063604"/>
<dbReference type="HOGENOM" id="CLU_924263_0_0_1"/>
<dbReference type="InParanoid" id="Q9BXD5"/>
<dbReference type="OMA" id="YWNAISA"/>
<dbReference type="OrthoDB" id="191315at2759"/>
<dbReference type="PAN-GO" id="Q9BXD5">
    <property type="GO annotations" value="2 GO annotations based on evolutionary models"/>
</dbReference>
<dbReference type="PhylomeDB" id="Q9BXD5"/>
<dbReference type="TreeFam" id="TF353639"/>
<dbReference type="BRENDA" id="4.1.3.3">
    <property type="organism ID" value="2681"/>
</dbReference>
<dbReference type="PathwayCommons" id="Q9BXD5"/>
<dbReference type="Reactome" id="R-HSA-4085001">
    <property type="pathway name" value="Sialic acid metabolism"/>
</dbReference>
<dbReference type="SignaLink" id="Q9BXD5"/>
<dbReference type="UniPathway" id="UPA00629"/>
<dbReference type="BioGRID-ORCS" id="80896">
    <property type="hits" value="37 hits in 1153 CRISPR screens"/>
</dbReference>
<dbReference type="ChiTaRS" id="NPL">
    <property type="organism name" value="human"/>
</dbReference>
<dbReference type="GenomeRNAi" id="80896"/>
<dbReference type="Pharos" id="Q9BXD5">
    <property type="development level" value="Tbio"/>
</dbReference>
<dbReference type="PRO" id="PR:Q9BXD5"/>
<dbReference type="Proteomes" id="UP000005640">
    <property type="component" value="Chromosome 1"/>
</dbReference>
<dbReference type="RNAct" id="Q9BXD5">
    <property type="molecule type" value="protein"/>
</dbReference>
<dbReference type="Bgee" id="ENSG00000135838">
    <property type="expression patterns" value="Expressed in monocyte and 159 other cell types or tissues"/>
</dbReference>
<dbReference type="ExpressionAtlas" id="Q9BXD5">
    <property type="expression patterns" value="baseline and differential"/>
</dbReference>
<dbReference type="GO" id="GO:0005829">
    <property type="term" value="C:cytosol"/>
    <property type="evidence" value="ECO:0000304"/>
    <property type="project" value="Reactome"/>
</dbReference>
<dbReference type="GO" id="GO:0042802">
    <property type="term" value="F:identical protein binding"/>
    <property type="evidence" value="ECO:0000353"/>
    <property type="project" value="IntAct"/>
</dbReference>
<dbReference type="GO" id="GO:0008747">
    <property type="term" value="F:N-acetylneuraminate lyase activity"/>
    <property type="evidence" value="ECO:0000314"/>
    <property type="project" value="UniProtKB"/>
</dbReference>
<dbReference type="GO" id="GO:0005975">
    <property type="term" value="P:carbohydrate metabolic process"/>
    <property type="evidence" value="ECO:0007669"/>
    <property type="project" value="InterPro"/>
</dbReference>
<dbReference type="GO" id="GO:0019262">
    <property type="term" value="P:N-acetylneuraminate catabolic process"/>
    <property type="evidence" value="ECO:0000314"/>
    <property type="project" value="UniProtKB"/>
</dbReference>
<dbReference type="CDD" id="cd00954">
    <property type="entry name" value="NAL"/>
    <property type="match status" value="1"/>
</dbReference>
<dbReference type="FunFam" id="3.20.20.70:FF:000133">
    <property type="entry name" value="N-acetylneuraminate pyruvate lyase"/>
    <property type="match status" value="1"/>
</dbReference>
<dbReference type="Gene3D" id="3.20.20.70">
    <property type="entry name" value="Aldolase class I"/>
    <property type="match status" value="1"/>
</dbReference>
<dbReference type="InterPro" id="IPR013785">
    <property type="entry name" value="Aldolase_TIM"/>
</dbReference>
<dbReference type="InterPro" id="IPR002220">
    <property type="entry name" value="DapA-like"/>
</dbReference>
<dbReference type="InterPro" id="IPR005264">
    <property type="entry name" value="NanA"/>
</dbReference>
<dbReference type="PANTHER" id="PTHR12128">
    <property type="entry name" value="DIHYDRODIPICOLINATE SYNTHASE"/>
    <property type="match status" value="1"/>
</dbReference>
<dbReference type="PANTHER" id="PTHR12128:SF21">
    <property type="entry name" value="N-ACETYLNEURAMINATE LYASE"/>
    <property type="match status" value="1"/>
</dbReference>
<dbReference type="Pfam" id="PF00701">
    <property type="entry name" value="DHDPS"/>
    <property type="match status" value="1"/>
</dbReference>
<dbReference type="PIRSF" id="PIRSF001365">
    <property type="entry name" value="DHDPS"/>
    <property type="match status" value="1"/>
</dbReference>
<dbReference type="PRINTS" id="PR00146">
    <property type="entry name" value="DHPICSNTHASE"/>
</dbReference>
<dbReference type="SMART" id="SM01130">
    <property type="entry name" value="DHDPS"/>
    <property type="match status" value="1"/>
</dbReference>
<dbReference type="SUPFAM" id="SSF51569">
    <property type="entry name" value="Aldolase"/>
    <property type="match status" value="1"/>
</dbReference>
<keyword id="KW-0002">3D-structure</keyword>
<keyword id="KW-0025">Alternative splicing</keyword>
<keyword id="KW-0119">Carbohydrate metabolism</keyword>
<keyword id="KW-0963">Cytoplasm</keyword>
<keyword id="KW-0456">Lyase</keyword>
<keyword id="KW-1267">Proteomics identification</keyword>
<keyword id="KW-1185">Reference proteome</keyword>
<keyword id="KW-0704">Schiff base</keyword>
<protein>
    <recommendedName>
        <fullName evidence="9">N-acetylneuraminate lyase</fullName>
        <shortName>NALase</shortName>
        <ecNumber evidence="5">4.1.3.3</ecNumber>
    </recommendedName>
    <alternativeName>
        <fullName>N-acetylneuraminate pyruvate-lyase</fullName>
    </alternativeName>
    <alternativeName>
        <fullName>N-acetylneuraminic acid aldolase</fullName>
    </alternativeName>
    <alternativeName>
        <fullName>Sialate lyase</fullName>
    </alternativeName>
    <alternativeName>
        <fullName>Sialate-pyruvate lyase</fullName>
    </alternativeName>
    <alternativeName>
        <fullName>Sialic acid aldolase</fullName>
    </alternativeName>
    <alternativeName>
        <fullName>Sialic acid lyase</fullName>
    </alternativeName>
</protein>
<reference key="1">
    <citation type="journal article" date="2001" name="Genomics">
        <title>Cloning and characterization of 13 novel transcripts and the human RGS8 gene from the 1q25 region encompassing the hereditary prostate cancer (HPC1) locus.</title>
        <authorList>
            <person name="Sood R."/>
            <person name="Bonner T.I."/>
            <person name="Malakowska I."/>
            <person name="Stephan D.A."/>
            <person name="Robbins C.M."/>
            <person name="Connors T.D."/>
            <person name="Morgenbesser S.D."/>
            <person name="Su K."/>
            <person name="Faruque M.U."/>
            <person name="Pinkett H."/>
            <person name="Graham C."/>
            <person name="Baxevanis A.D."/>
            <person name="Klinger K.W."/>
            <person name="Landes G.M."/>
            <person name="Trent J.M."/>
            <person name="Carpten J.D."/>
        </authorList>
    </citation>
    <scope>NUCLEOTIDE SEQUENCE [MRNA] (ISOFORM 1)</scope>
</reference>
<reference key="2">
    <citation type="journal article" date="2005" name="DNA Seq.">
        <title>A novel splice variant of human gene NPL, mainly expressed in human liver, kidney and peripheral blood leukocyte.</title>
        <authorList>
            <person name="Wu M."/>
            <person name="Gu S."/>
            <person name="Xu J."/>
            <person name="Zou X."/>
            <person name="Zheng H."/>
            <person name="Jin Z."/>
            <person name="Xie Y."/>
            <person name="Ji C."/>
            <person name="Mao Y."/>
        </authorList>
    </citation>
    <scope>NUCLEOTIDE SEQUENCE [MRNA] (ISOFORM 2)</scope>
    <scope>TISSUE SPECIFICITY</scope>
</reference>
<reference key="3">
    <citation type="journal article" date="2004" name="Nat. Genet.">
        <title>Complete sequencing and characterization of 21,243 full-length human cDNAs.</title>
        <authorList>
            <person name="Ota T."/>
            <person name="Suzuki Y."/>
            <person name="Nishikawa T."/>
            <person name="Otsuki T."/>
            <person name="Sugiyama T."/>
            <person name="Irie R."/>
            <person name="Wakamatsu A."/>
            <person name="Hayashi K."/>
            <person name="Sato H."/>
            <person name="Nagai K."/>
            <person name="Kimura K."/>
            <person name="Makita H."/>
            <person name="Sekine M."/>
            <person name="Obayashi M."/>
            <person name="Nishi T."/>
            <person name="Shibahara T."/>
            <person name="Tanaka T."/>
            <person name="Ishii S."/>
            <person name="Yamamoto J."/>
            <person name="Saito K."/>
            <person name="Kawai Y."/>
            <person name="Isono Y."/>
            <person name="Nakamura Y."/>
            <person name="Nagahari K."/>
            <person name="Murakami K."/>
            <person name="Yasuda T."/>
            <person name="Iwayanagi T."/>
            <person name="Wagatsuma M."/>
            <person name="Shiratori A."/>
            <person name="Sudo H."/>
            <person name="Hosoiri T."/>
            <person name="Kaku Y."/>
            <person name="Kodaira H."/>
            <person name="Kondo H."/>
            <person name="Sugawara M."/>
            <person name="Takahashi M."/>
            <person name="Kanda K."/>
            <person name="Yokoi T."/>
            <person name="Furuya T."/>
            <person name="Kikkawa E."/>
            <person name="Omura Y."/>
            <person name="Abe K."/>
            <person name="Kamihara K."/>
            <person name="Katsuta N."/>
            <person name="Sato K."/>
            <person name="Tanikawa M."/>
            <person name="Yamazaki M."/>
            <person name="Ninomiya K."/>
            <person name="Ishibashi T."/>
            <person name="Yamashita H."/>
            <person name="Murakawa K."/>
            <person name="Fujimori K."/>
            <person name="Tanai H."/>
            <person name="Kimata M."/>
            <person name="Watanabe M."/>
            <person name="Hiraoka S."/>
            <person name="Chiba Y."/>
            <person name="Ishida S."/>
            <person name="Ono Y."/>
            <person name="Takiguchi S."/>
            <person name="Watanabe S."/>
            <person name="Yosida M."/>
            <person name="Hotuta T."/>
            <person name="Kusano J."/>
            <person name="Kanehori K."/>
            <person name="Takahashi-Fujii A."/>
            <person name="Hara H."/>
            <person name="Tanase T.-O."/>
            <person name="Nomura Y."/>
            <person name="Togiya S."/>
            <person name="Komai F."/>
            <person name="Hara R."/>
            <person name="Takeuchi K."/>
            <person name="Arita M."/>
            <person name="Imose N."/>
            <person name="Musashino K."/>
            <person name="Yuuki H."/>
            <person name="Oshima A."/>
            <person name="Sasaki N."/>
            <person name="Aotsuka S."/>
            <person name="Yoshikawa Y."/>
            <person name="Matsunawa H."/>
            <person name="Ichihara T."/>
            <person name="Shiohata N."/>
            <person name="Sano S."/>
            <person name="Moriya S."/>
            <person name="Momiyama H."/>
            <person name="Satoh N."/>
            <person name="Takami S."/>
            <person name="Terashima Y."/>
            <person name="Suzuki O."/>
            <person name="Nakagawa S."/>
            <person name="Senoh A."/>
            <person name="Mizoguchi H."/>
            <person name="Goto Y."/>
            <person name="Shimizu F."/>
            <person name="Wakebe H."/>
            <person name="Hishigaki H."/>
            <person name="Watanabe T."/>
            <person name="Sugiyama A."/>
            <person name="Takemoto M."/>
            <person name="Kawakami B."/>
            <person name="Yamazaki M."/>
            <person name="Watanabe K."/>
            <person name="Kumagai A."/>
            <person name="Itakura S."/>
            <person name="Fukuzumi Y."/>
            <person name="Fujimori Y."/>
            <person name="Komiyama M."/>
            <person name="Tashiro H."/>
            <person name="Tanigami A."/>
            <person name="Fujiwara T."/>
            <person name="Ono T."/>
            <person name="Yamada K."/>
            <person name="Fujii Y."/>
            <person name="Ozaki K."/>
            <person name="Hirao M."/>
            <person name="Ohmori Y."/>
            <person name="Kawabata A."/>
            <person name="Hikiji T."/>
            <person name="Kobatake N."/>
            <person name="Inagaki H."/>
            <person name="Ikema Y."/>
            <person name="Okamoto S."/>
            <person name="Okitani R."/>
            <person name="Kawakami T."/>
            <person name="Noguchi S."/>
            <person name="Itoh T."/>
            <person name="Shigeta K."/>
            <person name="Senba T."/>
            <person name="Matsumura K."/>
            <person name="Nakajima Y."/>
            <person name="Mizuno T."/>
            <person name="Morinaga M."/>
            <person name="Sasaki M."/>
            <person name="Togashi T."/>
            <person name="Oyama M."/>
            <person name="Hata H."/>
            <person name="Watanabe M."/>
            <person name="Komatsu T."/>
            <person name="Mizushima-Sugano J."/>
            <person name="Satoh T."/>
            <person name="Shirai Y."/>
            <person name="Takahashi Y."/>
            <person name="Nakagawa K."/>
            <person name="Okumura K."/>
            <person name="Nagase T."/>
            <person name="Nomura N."/>
            <person name="Kikuchi H."/>
            <person name="Masuho Y."/>
            <person name="Yamashita R."/>
            <person name="Nakai K."/>
            <person name="Yada T."/>
            <person name="Nakamura Y."/>
            <person name="Ohara O."/>
            <person name="Isogai T."/>
            <person name="Sugano S."/>
        </authorList>
    </citation>
    <scope>NUCLEOTIDE SEQUENCE [LARGE SCALE MRNA]</scope>
    <source>
        <tissue>Teratocarcinoma</tissue>
    </source>
</reference>
<reference key="4">
    <citation type="journal article" date="2006" name="Nature">
        <title>The DNA sequence and biological annotation of human chromosome 1.</title>
        <authorList>
            <person name="Gregory S.G."/>
            <person name="Barlow K.F."/>
            <person name="McLay K.E."/>
            <person name="Kaul R."/>
            <person name="Swarbreck D."/>
            <person name="Dunham A."/>
            <person name="Scott C.E."/>
            <person name="Howe K.L."/>
            <person name="Woodfine K."/>
            <person name="Spencer C.C.A."/>
            <person name="Jones M.C."/>
            <person name="Gillson C."/>
            <person name="Searle S."/>
            <person name="Zhou Y."/>
            <person name="Kokocinski F."/>
            <person name="McDonald L."/>
            <person name="Evans R."/>
            <person name="Phillips K."/>
            <person name="Atkinson A."/>
            <person name="Cooper R."/>
            <person name="Jones C."/>
            <person name="Hall R.E."/>
            <person name="Andrews T.D."/>
            <person name="Lloyd C."/>
            <person name="Ainscough R."/>
            <person name="Almeida J.P."/>
            <person name="Ambrose K.D."/>
            <person name="Anderson F."/>
            <person name="Andrew R.W."/>
            <person name="Ashwell R.I.S."/>
            <person name="Aubin K."/>
            <person name="Babbage A.K."/>
            <person name="Bagguley C.L."/>
            <person name="Bailey J."/>
            <person name="Beasley H."/>
            <person name="Bethel G."/>
            <person name="Bird C.P."/>
            <person name="Bray-Allen S."/>
            <person name="Brown J.Y."/>
            <person name="Brown A.J."/>
            <person name="Buckley D."/>
            <person name="Burton J."/>
            <person name="Bye J."/>
            <person name="Carder C."/>
            <person name="Chapman J.C."/>
            <person name="Clark S.Y."/>
            <person name="Clarke G."/>
            <person name="Clee C."/>
            <person name="Cobley V."/>
            <person name="Collier R.E."/>
            <person name="Corby N."/>
            <person name="Coville G.J."/>
            <person name="Davies J."/>
            <person name="Deadman R."/>
            <person name="Dunn M."/>
            <person name="Earthrowl M."/>
            <person name="Ellington A.G."/>
            <person name="Errington H."/>
            <person name="Frankish A."/>
            <person name="Frankland J."/>
            <person name="French L."/>
            <person name="Garner P."/>
            <person name="Garnett J."/>
            <person name="Gay L."/>
            <person name="Ghori M.R.J."/>
            <person name="Gibson R."/>
            <person name="Gilby L.M."/>
            <person name="Gillett W."/>
            <person name="Glithero R.J."/>
            <person name="Grafham D.V."/>
            <person name="Griffiths C."/>
            <person name="Griffiths-Jones S."/>
            <person name="Grocock R."/>
            <person name="Hammond S."/>
            <person name="Harrison E.S.I."/>
            <person name="Hart E."/>
            <person name="Haugen E."/>
            <person name="Heath P.D."/>
            <person name="Holmes S."/>
            <person name="Holt K."/>
            <person name="Howden P.J."/>
            <person name="Hunt A.R."/>
            <person name="Hunt S.E."/>
            <person name="Hunter G."/>
            <person name="Isherwood J."/>
            <person name="James R."/>
            <person name="Johnson C."/>
            <person name="Johnson D."/>
            <person name="Joy A."/>
            <person name="Kay M."/>
            <person name="Kershaw J.K."/>
            <person name="Kibukawa M."/>
            <person name="Kimberley A.M."/>
            <person name="King A."/>
            <person name="Knights A.J."/>
            <person name="Lad H."/>
            <person name="Laird G."/>
            <person name="Lawlor S."/>
            <person name="Leongamornlert D.A."/>
            <person name="Lloyd D.M."/>
            <person name="Loveland J."/>
            <person name="Lovell J."/>
            <person name="Lush M.J."/>
            <person name="Lyne R."/>
            <person name="Martin S."/>
            <person name="Mashreghi-Mohammadi M."/>
            <person name="Matthews L."/>
            <person name="Matthews N.S.W."/>
            <person name="McLaren S."/>
            <person name="Milne S."/>
            <person name="Mistry S."/>
            <person name="Moore M.J.F."/>
            <person name="Nickerson T."/>
            <person name="O'Dell C.N."/>
            <person name="Oliver K."/>
            <person name="Palmeiri A."/>
            <person name="Palmer S.A."/>
            <person name="Parker A."/>
            <person name="Patel D."/>
            <person name="Pearce A.V."/>
            <person name="Peck A.I."/>
            <person name="Pelan S."/>
            <person name="Phelps K."/>
            <person name="Phillimore B.J."/>
            <person name="Plumb R."/>
            <person name="Rajan J."/>
            <person name="Raymond C."/>
            <person name="Rouse G."/>
            <person name="Saenphimmachak C."/>
            <person name="Sehra H.K."/>
            <person name="Sheridan E."/>
            <person name="Shownkeen R."/>
            <person name="Sims S."/>
            <person name="Skuce C.D."/>
            <person name="Smith M."/>
            <person name="Steward C."/>
            <person name="Subramanian S."/>
            <person name="Sycamore N."/>
            <person name="Tracey A."/>
            <person name="Tromans A."/>
            <person name="Van Helmond Z."/>
            <person name="Wall M."/>
            <person name="Wallis J.M."/>
            <person name="White S."/>
            <person name="Whitehead S.L."/>
            <person name="Wilkinson J.E."/>
            <person name="Willey D.L."/>
            <person name="Williams H."/>
            <person name="Wilming L."/>
            <person name="Wray P.W."/>
            <person name="Wu Z."/>
            <person name="Coulson A."/>
            <person name="Vaudin M."/>
            <person name="Sulston J.E."/>
            <person name="Durbin R.M."/>
            <person name="Hubbard T."/>
            <person name="Wooster R."/>
            <person name="Dunham I."/>
            <person name="Carter N.P."/>
            <person name="McVean G."/>
            <person name="Ross M.T."/>
            <person name="Harrow J."/>
            <person name="Olson M.V."/>
            <person name="Beck S."/>
            <person name="Rogers J."/>
            <person name="Bentley D.R."/>
        </authorList>
    </citation>
    <scope>NUCLEOTIDE SEQUENCE [LARGE SCALE GENOMIC DNA]</scope>
</reference>
<reference key="5">
    <citation type="journal article" date="2004" name="Genome Res.">
        <title>The status, quality, and expansion of the NIH full-length cDNA project: the Mammalian Gene Collection (MGC).</title>
        <authorList>
            <consortium name="The MGC Project Team"/>
        </authorList>
    </citation>
    <scope>NUCLEOTIDE SEQUENCE [LARGE SCALE MRNA] (ISOFORMS 1; 3; 4 AND 5)</scope>
    <source>
        <tissue>Hypothalamus</tissue>
        <tissue>Kidney</tissue>
        <tissue>Testis</tissue>
    </source>
</reference>
<reference key="6">
    <citation type="journal article" date="2012" name="J. Biol. Chem.">
        <title>Metabolism of vertebrate amino sugars with N-glycolyl groups: elucidating the intracellular fate of the non-human sialic acid N-glycolylneuraminic acid.</title>
        <authorList>
            <person name="Bergfeld A.K."/>
            <person name="Pearce O.M."/>
            <person name="Diaz S.L."/>
            <person name="Pham T."/>
            <person name="Varki A."/>
        </authorList>
    </citation>
    <scope>PATHWAY</scope>
</reference>
<reference key="7">
    <citation type="journal article" date="2021" name="J. Biol. Chem.">
        <title>The metalloprotein YhcH is an anomerase providing N-acetylneuraminate aldolase with the open form of its substrate.</title>
        <authorList>
            <person name="Kentache T."/>
            <person name="Thabault L."/>
            <person name="Deumer G."/>
            <person name="Haufroid V."/>
            <person name="Frederick R."/>
            <person name="Linster C.L."/>
            <person name="Peracchi A."/>
            <person name="Veiga-da-Cunha M."/>
            <person name="Bommer G.T."/>
            <person name="Van Schaftingen E."/>
        </authorList>
    </citation>
    <scope>FUNCTION</scope>
    <scope>CATALYTIC ACTIVITY</scope>
</reference>
<reference evidence="12" key="8">
    <citation type="submission" date="2017-08" db="PDB data bank">
        <title>Crystal structure of Human NAL at a resolution of 1.6 Angstrom.</title>
        <authorList>
            <person name="Pearce F.G."/>
            <person name="Bundela R."/>
            <person name="Keown J.R."/>
        </authorList>
    </citation>
    <scope>X-RAY CRYSTALLOGRAPHY (1.60 ANGSTROMS)</scope>
    <scope>SUBUNIT</scope>
</reference>
<proteinExistence type="evidence at protein level"/>
<comment type="function">
    <text evidence="4 5 10">Catalyzes the cleavage of N-acetylneuraminic acid (sialic acid) to form pyruvate and N-acetylmannosamine via a Schiff base intermediate (PubMed:33895133). It prevents sialic acids from being recycled and returning to the cell surface (PubMed:33895133). Involved in the N-glycolylneuraminic acid (Neu5Gc) degradation pathway (PubMed:22692205, PubMed:33895133). Although human is not able to catalyze formation of Neu5Gc due to the inactive CMAHP enzyme, Neu5Gc is present in food and must be degraded (Probable).</text>
</comment>
<comment type="catalytic activity">
    <reaction evidence="5">
        <text>aceneuramate = aldehydo-N-acetyl-D-mannosamine + pyruvate</text>
        <dbReference type="Rhea" id="RHEA:23296"/>
        <dbReference type="ChEBI" id="CHEBI:15361"/>
        <dbReference type="ChEBI" id="CHEBI:17122"/>
        <dbReference type="ChEBI" id="CHEBI:173083"/>
        <dbReference type="EC" id="4.1.3.3"/>
    </reaction>
</comment>
<comment type="pathway">
    <text evidence="4 5">Amino-sugar metabolism; N-acetylneuraminate degradation.</text>
</comment>
<comment type="subunit">
    <text evidence="6">Homotetramer.</text>
</comment>
<comment type="interaction">
    <interactant intactId="EBI-10287915">
        <id>Q9BXD5</id>
    </interactant>
    <interactant intactId="EBI-10287915">
        <id>Q9BXD5</id>
        <label>NPL</label>
    </interactant>
    <organismsDiffer>false</organismsDiffer>
    <experiments>4</experiments>
</comment>
<comment type="interaction">
    <interactant intactId="EBI-10287915">
        <id>Q9BXD5</id>
    </interactant>
    <interactant intactId="EBI-741158">
        <id>Q96HA8</id>
        <label>NTAQ1</label>
    </interactant>
    <organismsDiffer>false</organismsDiffer>
    <experiments>3</experiments>
</comment>
<comment type="subcellular location">
    <subcellularLocation>
        <location evidence="1">Cytoplasm</location>
    </subcellularLocation>
</comment>
<comment type="alternative products">
    <event type="alternative splicing"/>
    <isoform>
        <id>Q9BXD5-1</id>
        <name>1</name>
        <sequence type="displayed"/>
    </isoform>
    <isoform>
        <id>Q9BXD5-2</id>
        <name>2</name>
        <sequence type="described" ref="VSP_022518"/>
    </isoform>
    <isoform>
        <id>Q9BXD5-3</id>
        <name>3</name>
        <sequence type="described" ref="VSP_022522"/>
    </isoform>
    <isoform>
        <id>Q9BXD5-4</id>
        <name>4</name>
        <sequence type="described" ref="VSP_022521 VSP_022522"/>
    </isoform>
    <isoform>
        <id>Q9BXD5-5</id>
        <name>5</name>
        <sequence type="described" ref="VSP_022519 VSP_022520"/>
    </isoform>
</comment>
<comment type="tissue specificity">
    <text evidence="3">Isoform 2 is expressed in placenta, liver, kidney, pancreas, spleen, thymus, ovary, small intestine and peripheral blood leukocyte.</text>
</comment>
<comment type="miscellaneous">
    <molecule>Isoform 5</molecule>
    <text evidence="9">May be produced at very low levels due to a premature stop codon in the mRNA, leading to nonsense-mediated mRNA decay.</text>
</comment>
<comment type="similarity">
    <text evidence="9">Belongs to the DapA family. NanA subfamily.</text>
</comment>
<comment type="sequence caution" evidence="9">
    <conflict type="frameshift">
        <sequence resource="EMBL" id="BC042003"/>
    </conflict>
</comment>
<gene>
    <name evidence="11" type="primary">NPL</name>
    <name type="synonym">C1orf13</name>
</gene>
<organism>
    <name type="scientific">Homo sapiens</name>
    <name type="common">Human</name>
    <dbReference type="NCBI Taxonomy" id="9606"/>
    <lineage>
        <taxon>Eukaryota</taxon>
        <taxon>Metazoa</taxon>
        <taxon>Chordata</taxon>
        <taxon>Craniata</taxon>
        <taxon>Vertebrata</taxon>
        <taxon>Euteleostomi</taxon>
        <taxon>Mammalia</taxon>
        <taxon>Eutheria</taxon>
        <taxon>Euarchontoglires</taxon>
        <taxon>Primates</taxon>
        <taxon>Haplorrhini</taxon>
        <taxon>Catarrhini</taxon>
        <taxon>Hominidae</taxon>
        <taxon>Homo</taxon>
    </lineage>
</organism>
<evidence type="ECO:0000250" key="1"/>
<evidence type="ECO:0000250" key="2">
    <source>
        <dbReference type="UniProtKB" id="P0A6L4"/>
    </source>
</evidence>
<evidence type="ECO:0000269" key="3">
    <source>
    </source>
</evidence>
<evidence type="ECO:0000269" key="4">
    <source>
    </source>
</evidence>
<evidence type="ECO:0000269" key="5">
    <source>
    </source>
</evidence>
<evidence type="ECO:0000269" key="6">
    <source ref="8"/>
</evidence>
<evidence type="ECO:0000303" key="7">
    <source>
    </source>
</evidence>
<evidence type="ECO:0000303" key="8">
    <source>
    </source>
</evidence>
<evidence type="ECO:0000305" key="9"/>
<evidence type="ECO:0000305" key="10">
    <source>
    </source>
</evidence>
<evidence type="ECO:0000312" key="11">
    <source>
        <dbReference type="HGNC" id="HGNC:16781"/>
    </source>
</evidence>
<evidence type="ECO:0007744" key="12">
    <source>
        <dbReference type="PDB" id="6ARH"/>
    </source>
</evidence>
<evidence type="ECO:0007829" key="13">
    <source>
        <dbReference type="PDB" id="6ARH"/>
    </source>
</evidence>
<sequence length="320" mass="35163">MAFPKKKLQGLVAATITPMTENGEINFSVIGQYVDYLVKEQGVKNIFVNGTTGEGLSLSVSERRQVAEEWVTKGKDKLDQVIIHVGALSLKESQELAQHAAEIGADGIAVIAPFFLKPWTKDILINFLKEVAAAAPALPFYYYHIPALTGVKIRAEELLDGILDKIPTFQGLKFSDTDLLDFGQCVDQNRQQQFAFLFGVDEQLLSALVMGATGAVGSTYNYLGKKTNQMLEAFEQKDFSLALNYQFCIQRFINFVVKLGFGVSQTKAIMTLVSGIPMGPPRLPLQKASREFTDSAEAKLKSLDFLSFTDLKDGNLEAGS</sequence>
<feature type="chain" id="PRO_0000273352" description="N-acetylneuraminate lyase">
    <location>
        <begin position="1"/>
        <end position="320"/>
    </location>
</feature>
<feature type="active site" description="Proton donor" evidence="2">
    <location>
        <position position="143"/>
    </location>
</feature>
<feature type="active site" description="Schiff-base intermediate with substrate" evidence="2">
    <location>
        <position position="173"/>
    </location>
</feature>
<feature type="binding site" evidence="2">
    <location>
        <position position="51"/>
    </location>
    <ligand>
        <name>aceneuramate</name>
        <dbReference type="ChEBI" id="CHEBI:173083"/>
    </ligand>
</feature>
<feature type="binding site" evidence="2">
    <location>
        <position position="52"/>
    </location>
    <ligand>
        <name>aceneuramate</name>
        <dbReference type="ChEBI" id="CHEBI:173083"/>
    </ligand>
</feature>
<feature type="binding site" evidence="2">
    <location>
        <position position="175"/>
    </location>
    <ligand>
        <name>aceneuramate</name>
        <dbReference type="ChEBI" id="CHEBI:173083"/>
    </ligand>
</feature>
<feature type="binding site" evidence="2">
    <location>
        <position position="199"/>
    </location>
    <ligand>
        <name>aceneuramate</name>
        <dbReference type="ChEBI" id="CHEBI:173083"/>
    </ligand>
</feature>
<feature type="binding site" evidence="2">
    <location>
        <position position="201"/>
    </location>
    <ligand>
        <name>aceneuramate</name>
        <dbReference type="ChEBI" id="CHEBI:173083"/>
    </ligand>
</feature>
<feature type="binding site" evidence="2">
    <location>
        <position position="202"/>
    </location>
    <ligand>
        <name>aceneuramate</name>
        <dbReference type="ChEBI" id="CHEBI:173083"/>
    </ligand>
</feature>
<feature type="binding site" evidence="2">
    <location>
        <position position="218"/>
    </location>
    <ligand>
        <name>aceneuramate</name>
        <dbReference type="ChEBI" id="CHEBI:173083"/>
    </ligand>
</feature>
<feature type="splice variant" id="VSP_022518" description="In isoform 2." evidence="8">
    <original>MAFPKKKLQGLVAATITPMTENGEINFSVIGQYVDYLVKEQGVKNIFVNGTTGEGLSLSVSERRQVAEEWVTKGKDK</original>
    <variation>MSRAPGILASWRRAPSLSVQKGSQTARHTCHPEVPLGNCFLPVYKASPLTVTRLWAER</variation>
    <location>
        <begin position="1"/>
        <end position="77"/>
    </location>
</feature>
<feature type="splice variant" id="VSP_022519" description="In isoform 5." evidence="7">
    <original>LDQVIIHVGALSLKESQELAQHAAEIGADGIA</original>
    <variation>SNHHKLGTIRTTQSRQSSFRRQLKAWHSGSHL</variation>
    <location>
        <begin position="78"/>
        <end position="109"/>
    </location>
</feature>
<feature type="splice variant" id="VSP_022520" description="In isoform 5." evidence="7">
    <location>
        <begin position="110"/>
        <end position="320"/>
    </location>
</feature>
<feature type="splice variant" id="VSP_022521" description="In isoform 4." evidence="7">
    <location>
        <begin position="203"/>
        <end position="246"/>
    </location>
</feature>
<feature type="splice variant" id="VSP_022522" description="In isoform 3 and isoform 4." evidence="7">
    <original>GFGVSQTKAIMTLVSGIPMGPPRLPLQKASREFTDSAEAKLKSLDFLSFTDLKDGNLEAGS</original>
    <variation>ENSKLKVSKNQRTLPLGTTNFPFLH</variation>
    <location>
        <begin position="260"/>
        <end position="320"/>
    </location>
</feature>
<feature type="sequence conflict" description="In Ref. 5; BC034966." evidence="9" ref="5">
    <original>P</original>
    <variation>S</variation>
    <location>
        <position position="4"/>
    </location>
</feature>
<feature type="sequence conflict" description="In Ref. 5; BC042003." evidence="9" ref="5">
    <original>Q</original>
    <variation>E</variation>
    <location>
        <position position="98"/>
    </location>
</feature>
<feature type="sequence conflict" description="In Ref. 5; BC042003." evidence="9" ref="5">
    <original>A</original>
    <variation>E</variation>
    <location>
        <position position="212"/>
    </location>
</feature>
<feature type="sequence conflict" description="In Ref. 3; BAG36036." evidence="9" ref="3">
    <original>G</original>
    <variation>V</variation>
    <location>
        <position position="260"/>
    </location>
</feature>
<feature type="strand" evidence="13">
    <location>
        <begin position="10"/>
        <end position="14"/>
    </location>
</feature>
<feature type="strand" evidence="13">
    <location>
        <begin position="23"/>
        <end position="25"/>
    </location>
</feature>
<feature type="helix" evidence="13">
    <location>
        <begin position="27"/>
        <end position="29"/>
    </location>
</feature>
<feature type="helix" evidence="13">
    <location>
        <begin position="30"/>
        <end position="40"/>
    </location>
</feature>
<feature type="strand" evidence="13">
    <location>
        <begin position="45"/>
        <end position="50"/>
    </location>
</feature>
<feature type="turn" evidence="13">
    <location>
        <begin position="51"/>
        <end position="54"/>
    </location>
</feature>
<feature type="helix" evidence="13">
    <location>
        <begin position="55"/>
        <end position="57"/>
    </location>
</feature>
<feature type="helix" evidence="13">
    <location>
        <begin position="60"/>
        <end position="74"/>
    </location>
</feature>
<feature type="turn" evidence="13">
    <location>
        <begin position="75"/>
        <end position="77"/>
    </location>
</feature>
<feature type="strand" evidence="13">
    <location>
        <begin position="79"/>
        <end position="84"/>
    </location>
</feature>
<feature type="helix" evidence="13">
    <location>
        <begin position="90"/>
        <end position="103"/>
    </location>
</feature>
<feature type="strand" evidence="13">
    <location>
        <begin position="106"/>
        <end position="111"/>
    </location>
</feature>
<feature type="helix" evidence="13">
    <location>
        <begin position="121"/>
        <end position="132"/>
    </location>
</feature>
<feature type="strand" evidence="13">
    <location>
        <begin position="140"/>
        <end position="144"/>
    </location>
</feature>
<feature type="helix" evidence="13">
    <location>
        <begin position="146"/>
        <end position="149"/>
    </location>
</feature>
<feature type="helix" evidence="13">
    <location>
        <begin position="155"/>
        <end position="159"/>
    </location>
</feature>
<feature type="helix" evidence="13">
    <location>
        <begin position="162"/>
        <end position="165"/>
    </location>
</feature>
<feature type="strand" evidence="13">
    <location>
        <begin position="169"/>
        <end position="174"/>
    </location>
</feature>
<feature type="helix" evidence="13">
    <location>
        <begin position="179"/>
        <end position="187"/>
    </location>
</feature>
<feature type="strand" evidence="13">
    <location>
        <begin position="195"/>
        <end position="198"/>
    </location>
</feature>
<feature type="helix" evidence="13">
    <location>
        <begin position="201"/>
        <end position="203"/>
    </location>
</feature>
<feature type="helix" evidence="13">
    <location>
        <begin position="204"/>
        <end position="209"/>
    </location>
</feature>
<feature type="strand" evidence="13">
    <location>
        <begin position="214"/>
        <end position="218"/>
    </location>
</feature>
<feature type="helix" evidence="13">
    <location>
        <begin position="220"/>
        <end position="235"/>
    </location>
</feature>
<feature type="helix" evidence="13">
    <location>
        <begin position="239"/>
        <end position="259"/>
    </location>
</feature>
<feature type="helix" evidence="13">
    <location>
        <begin position="263"/>
        <end position="274"/>
    </location>
</feature>
<feature type="helix" evidence="13">
    <location>
        <begin position="290"/>
        <end position="302"/>
    </location>
</feature>